<sequence>MESHVKYLDELILAIKDLNSGVDSKVQIKKVPTDPSSSQEYAKSLKILNTLIRNLKDQRRNNIMKNDTIFSKTVSALALLLEYNPFLLVMKDSNGNFEIQRLIDDFLNISVLNYDNYHRIWFMRRKLGSWCKACVEFYGKPAKFQLTAHFENTMNLYEQALTEVLLGKTELLKFYDTLKGLYILLYWFTSEYSTFGNSIAFLDSSLGFTKFDFNFQRLIRIVLYVFDSCELAALEYAEIQLKYISLVVDYVCNRTISTALDAPALVCCEQLKFVLTTMHHFLDNKYGLLDNDPTMAKGILRLYSLCISNDFSKCFVDHFPIDQWADFSQSEHFPFTQLTNKALSIVYFDLKRRSLPVEALKYDNKFNIWVYQSEPDSSLKNVTSPFDDRYKQLEKLRLLVLKKFNKTERGTLLKYRVNQLSPGFFQRAGNDFKLILNEASVSIQTCFKTNNITRLTSWTVILGRLACLESEKFSGTLPNSTKDMDNWYVCHLCDIEKTGNPFVRINPNRPEAAGKSEIFRILHSNFLSHPNIDEFSESLLSGILFSLHRIFSHFQPPKLTDGNGQINKSFKLVQKCFMNSNRYLRLLSTRIIPLFNISDSHNSEDEHTATLIKFLQSQKLPVVKENLVIAWTQLTLTTSNDVFDTLLLKLIDIFNSDDYSLRIMMTLQIKNMAKILKKTPYQLLSPILPVLLRQLGKNLVERKVGFQNLIELLGYSSKTILDIFQRYIIPYAIIQYKSDVLSEIAKIMCDGDTSLINQMKVNLLKKNSRQIFAVALVKHGLFSLDILETLFLNRAPTFDKGYITAYLPDYKTLAEITKLYKNSVTKDASDSENANMILCSLRFLITNFEKDKRHGSKYKNINNWTDDQEQAFQKKLQDNILGIFQVFSSDIHDVEGRTTYYEKLRVINGISFLIIYAPKKSIISALAQISICLQTGLGLKEVRYEAFRCWHLLVRHLNDEELSTVIDSLIAFILQKWSEFNGKLRNIVYSILDTLIKEKSDLILKLKPYTTLALVGKPELGILARDGQFARMVNKIRSTTDLIPIFANNLKSSNKYVINQNLDDIEVYLRRKQTERSIDFTPKKVGQTSDITLVLGALLDTSHKFRNLDKDLCEKCAKCISMIGVLDVTKHEFKRTTYSENEVYDLNDSVQTIKFLIWVINDILVPAFWQSENPSKQLFVALVIQESLKYCGLSSESWDMNHKELYPNEAKLWEKFNSVSKTTIYPLLSSLYLAQSWKEYVPLKYPSNNFKEGYKIWVKRFTLDLLKTGTTENHPLHVFSSLIREDDGSLSNFLLPYISLDIIIKAEKGTPYADILNGIIIEFDSIFTCNLEGMNNLQVDSLRMCYESIFRVFEYCKKWATEFKQNYSKLHGTFIIKDTKTTNMLLRIDEFLRTTPSDLLAQRSLETDSFERSALYLEQCYRQNPHDKNQNGQLLKNLQITYEEIGDIDSLDGVLRTFATGNLVSKIEELQYSENWKLAQDCFNVLGKFSDDPKTTTRMLKSMYDHQLYSQIISNSSFHSSDGKISLSPDVKEWYSIGLEAANLEGNVQTLKNWVEQIESLRNIDDREVLLQYNIAKALIAISNEDPLRTQKYIHNSFRLIGTNFITSSKETTLLKKQNLLMKLHSLYDLSFLSSAKDKFEYKSNTTILDYRMERIGADFVPNHYILSMRKSFDQLKMNEQADADLGKTFFTLAQLARNNARLDIASESLMHCLERRLPQAELEFAEILWKQGENDRALKIVQEIHEKYQENSSVNARDRAAVLLKFTEWLDLSNNSASEQIIKQYQDIFQIDSKWDKPYYSIGLYYSRLLERKKAEGYITNGRFEYRAISYFLLAFEKNTAKVRENLPKVITFWLDIAAASISEAPGNRKEMLSKATEDICSHVEEALQHCPTYIWYFVLTQLLSRLLHSHQSSAQIIMHILLSLAVEYPSHILWYITALVNSNSSKRVLRGKHILEKYRQHSQNPHDLVSSALDLTKALTRVCLQDVKSITSRSGKSLEKDFKFDMNVAPSAMVVPVRKNLDIISPLESNSMRGYQPFRPVVSIIRFGSSYKVFSSLKKPKQLNIIGSDGNIYGIMCKKEDVRQDNQYMQFATTMDFLLSKDIASRKRSLGINIYSVLSLREDCGILEMVPNVVTLRSILSTKYESLKIKYSLKSLHDRWQHTAVDGKLEFYMEQVDKFPPILYQWFLENFPDPINWFNARNTYARSYAVMAMVGHILGLGDRHCENILLDIQTGKVLHVDFDCLFEKGKRLPVPEIVPFRLTPNLLDALGIIGTEGTFKKSSEVTLALMRKNEVALMNVIETIMYDRNMDHSIQKALKVLRNKIRGIDPQDGLVLSVAGQTETLIQEATSEDNLSKMYIGWLPFW</sequence>
<reference key="1">
    <citation type="journal article" date="1994" name="Nucleic Acids Res.">
        <title>An essential gene, ESR1, is required for mitotic cell growth, DNA repair and meiotic recombination in Saccharomyces cerevisiae.</title>
        <authorList>
            <person name="Kato R."/>
            <person name="Ogawa H."/>
        </authorList>
    </citation>
    <scope>NUCLEOTIDE SEQUENCE [GENOMIC DNA]</scope>
    <scope>FUNCTION</scope>
    <scope>INDUCTION</scope>
</reference>
<reference key="2">
    <citation type="journal article" date="1994" name="Genes Dev.">
        <title>Mitotic checkpoint genes in budding yeast and the dependence of mitosis on DNA replication and repair.</title>
        <authorList>
            <person name="Weinert T.A."/>
            <person name="Kiser G.L."/>
            <person name="Hartwell L.H."/>
        </authorList>
    </citation>
    <scope>NUCLEOTIDE SEQUENCE [GENOMIC DNA]</scope>
</reference>
<reference key="3">
    <citation type="journal article" date="1994" name="Yeast">
        <title>The sequence of 29.7 kb from the right arm of chromosome II reveals 13 complete open reading frames, of which ten correspond to new genes.</title>
        <authorList>
            <person name="Becam A.-M."/>
            <person name="Cullin C."/>
            <person name="Grzybowska E."/>
            <person name="Lacroute F."/>
            <person name="Nasr F."/>
            <person name="Ozier-Kalogeropoulos O."/>
            <person name="Palucha A."/>
            <person name="Slonimski P.P."/>
            <person name="Zagulski M."/>
            <person name="Herbert C.J."/>
        </authorList>
    </citation>
    <scope>NUCLEOTIDE SEQUENCE [GENOMIC DNA]</scope>
    <source>
        <strain>ATCC 204508 / S288c</strain>
    </source>
</reference>
<reference key="4">
    <citation type="journal article" date="1994" name="EMBO J.">
        <title>Complete DNA sequence of yeast chromosome II.</title>
        <authorList>
            <person name="Feldmann H."/>
            <person name="Aigle M."/>
            <person name="Aljinovic G."/>
            <person name="Andre B."/>
            <person name="Baclet M.C."/>
            <person name="Barthe C."/>
            <person name="Baur A."/>
            <person name="Becam A.-M."/>
            <person name="Biteau N."/>
            <person name="Boles E."/>
            <person name="Brandt T."/>
            <person name="Brendel M."/>
            <person name="Brueckner M."/>
            <person name="Bussereau F."/>
            <person name="Christiansen C."/>
            <person name="Contreras R."/>
            <person name="Crouzet M."/>
            <person name="Cziepluch C."/>
            <person name="Demolis N."/>
            <person name="Delaveau T."/>
            <person name="Doignon F."/>
            <person name="Domdey H."/>
            <person name="Duesterhus S."/>
            <person name="Dubois E."/>
            <person name="Dujon B."/>
            <person name="El Bakkoury M."/>
            <person name="Entian K.-D."/>
            <person name="Feuermann M."/>
            <person name="Fiers W."/>
            <person name="Fobo G.M."/>
            <person name="Fritz C."/>
            <person name="Gassenhuber J."/>
            <person name="Glansdorff N."/>
            <person name="Goffeau A."/>
            <person name="Grivell L.A."/>
            <person name="de Haan M."/>
            <person name="Hein C."/>
            <person name="Herbert C.J."/>
            <person name="Hollenberg C.P."/>
            <person name="Holmstroem K."/>
            <person name="Jacq C."/>
            <person name="Jacquet M."/>
            <person name="Jauniaux J.-C."/>
            <person name="Jonniaux J.-L."/>
            <person name="Kallesoee T."/>
            <person name="Kiesau P."/>
            <person name="Kirchrath L."/>
            <person name="Koetter P."/>
            <person name="Korol S."/>
            <person name="Liebl S."/>
            <person name="Logghe M."/>
            <person name="Lohan A.J.E."/>
            <person name="Louis E.J."/>
            <person name="Li Z.Y."/>
            <person name="Maat M.J."/>
            <person name="Mallet L."/>
            <person name="Mannhaupt G."/>
            <person name="Messenguy F."/>
            <person name="Miosga T."/>
            <person name="Molemans F."/>
            <person name="Mueller S."/>
            <person name="Nasr F."/>
            <person name="Obermaier B."/>
            <person name="Perea J."/>
            <person name="Pierard A."/>
            <person name="Piravandi E."/>
            <person name="Pohl F.M."/>
            <person name="Pohl T.M."/>
            <person name="Potier S."/>
            <person name="Proft M."/>
            <person name="Purnelle B."/>
            <person name="Ramezani Rad M."/>
            <person name="Rieger M."/>
            <person name="Rose M."/>
            <person name="Schaaff-Gerstenschlaeger I."/>
            <person name="Scherens B."/>
            <person name="Schwarzlose C."/>
            <person name="Skala J."/>
            <person name="Slonimski P.P."/>
            <person name="Smits P.H.M."/>
            <person name="Souciet J.-L."/>
            <person name="Steensma H.Y."/>
            <person name="Stucka R."/>
            <person name="Urrestarazu L.A."/>
            <person name="van der Aart Q.J.M."/>
            <person name="Van Dyck L."/>
            <person name="Vassarotti A."/>
            <person name="Vetter I."/>
            <person name="Vierendeels F."/>
            <person name="Vissers S."/>
            <person name="Wagner G."/>
            <person name="de Wergifosse P."/>
            <person name="Wolfe K.H."/>
            <person name="Zagulski M."/>
            <person name="Zimmermann F.K."/>
            <person name="Mewes H.-W."/>
            <person name="Kleine K."/>
        </authorList>
    </citation>
    <scope>NUCLEOTIDE SEQUENCE [LARGE SCALE GENOMIC DNA]</scope>
    <source>
        <strain>ATCC 204508 / S288c</strain>
    </source>
</reference>
<reference key="5">
    <citation type="journal article" date="2014" name="G3 (Bethesda)">
        <title>The reference genome sequence of Saccharomyces cerevisiae: Then and now.</title>
        <authorList>
            <person name="Engel S.R."/>
            <person name="Dietrich F.S."/>
            <person name="Fisk D.G."/>
            <person name="Binkley G."/>
            <person name="Balakrishnan R."/>
            <person name="Costanzo M.C."/>
            <person name="Dwight S.S."/>
            <person name="Hitz B.C."/>
            <person name="Karra K."/>
            <person name="Nash R.S."/>
            <person name="Weng S."/>
            <person name="Wong E.D."/>
            <person name="Lloyd P."/>
            <person name="Skrzypek M.S."/>
            <person name="Miyasato S.R."/>
            <person name="Simison M."/>
            <person name="Cherry J.M."/>
        </authorList>
    </citation>
    <scope>GENOME REANNOTATION</scope>
    <source>
        <strain>ATCC 204508 / S288c</strain>
    </source>
</reference>
<reference key="6">
    <citation type="journal article" date="1996" name="Science">
        <title>Regulation of RAD53 by the ATM-like kinases MEC1 and TEL1 in yeast cell cycle checkpoint pathways.</title>
        <authorList>
            <person name="Sanchez Y."/>
            <person name="Desany B.A."/>
            <person name="Jones W.J."/>
            <person name="Liu Q."/>
            <person name="Wang B."/>
            <person name="Elledge S.J."/>
        </authorList>
    </citation>
    <scope>FUNCTION</scope>
</reference>
<reference key="7">
    <citation type="journal article" date="1996" name="Proc. Natl. Acad. Sci. U.S.A.">
        <title>The ATM homologue MEC1 is required for phosphorylation of replication protein A in yeast.</title>
        <authorList>
            <person name="Brush G.S."/>
            <person name="Morrow D.M."/>
            <person name="Hieter P."/>
            <person name="Kelly T.J."/>
        </authorList>
    </citation>
    <scope>PHOSPHORYLATION OF RPA2</scope>
</reference>
<reference key="8">
    <citation type="journal article" date="2000" name="EMBO J.">
        <title>LCD1: an essential gene involved in checkpoint control and regulation of the MEC1 signalling pathway in Saccharomyces cerevisiae.</title>
        <authorList>
            <person name="Rouse J."/>
            <person name="Jackson S.P."/>
        </authorList>
    </citation>
    <scope>INTERACTION WITH LCD1</scope>
</reference>
<reference key="9">
    <citation type="journal article" date="2000" name="Genes Dev.">
        <title>The checkpoint protein Ddc2, functionally related to S. pombe Rad26, interacts with Mec1 and is regulated by Mec1-dependent phosphorylation in budding yeast.</title>
        <authorList>
            <person name="Paciotti V."/>
            <person name="Clerici M."/>
            <person name="Lucchini G."/>
            <person name="Longhese M.P."/>
        </authorList>
    </citation>
    <scope>PHOSPHORYLATION OF LCD1</scope>
    <scope>INTERACTION WITH LCD1</scope>
</reference>
<reference key="10">
    <citation type="journal article" date="2000" name="Nature">
        <title>A role for Saccharomyces cerevisiae histone H2A in DNA repair.</title>
        <authorList>
            <person name="Downs J.A."/>
            <person name="Lowndes N.F."/>
            <person name="Jackson S.P."/>
        </authorList>
    </citation>
    <scope>FUNCTION</scope>
</reference>
<reference key="11">
    <citation type="journal article" date="2000" name="Proc. Natl. Acad. Sci. U.S.A.">
        <title>Protein kinase activity of Tel1p and Mec1p, two Saccharomyces cerevisiae proteins related to the human ATM protein kinase.</title>
        <authorList>
            <person name="Mallory J.C."/>
            <person name="Petes T.D."/>
        </authorList>
    </citation>
    <scope>IDENTIFICATION AS A KINASE</scope>
    <scope>FUNCTION</scope>
    <scope>MUTAGENESIS OF ASP-2224 AND ASN-2229</scope>
</reference>
<reference key="12">
    <citation type="journal article" date="2001" name="Mol. Cell. Biol.">
        <title>Characterization of mec1 kinase-deficient mutants and of new hypomorphic mec1 alleles impairing subsets of the DNA damage response pathway.</title>
        <authorList>
            <person name="Paciotti V."/>
            <person name="Clerici M."/>
            <person name="Scotti M."/>
            <person name="Lucchini G."/>
            <person name="Longhese M.P."/>
        </authorList>
    </citation>
    <scope>FUNCTION</scope>
    <scope>INTERACTION WITH LCD1</scope>
    <scope>PHOSPHORYLATION OF LCD1</scope>
    <scope>MUTAGENESIS OF VAL-225; SER-552; LEU-781; PHE-1179; ASN-1700; ASP-2224 AND ASP-2243</scope>
</reference>
<reference key="13">
    <citation type="journal article" date="2002" name="Mol. Biol. Cell">
        <title>MEC3, MEC1, and DDC2 are essential components of a telomere checkpoint pathway required for cell cycle arrest during senescence in Saccharomyces cerevisiae.</title>
        <authorList>
            <person name="Enomoto S."/>
            <person name="Glowczewski L."/>
            <person name="Berman J."/>
        </authorList>
    </citation>
    <scope>FUNCTION</scope>
</reference>
<reference key="14">
    <citation type="journal article" date="2003" name="EMBO Rep.">
        <title>Yeast histone 2A serine 129 is essential for the efficient repair of checkpoint-blind DNA damage.</title>
        <authorList>
            <person name="Redon C."/>
            <person name="Pilch D.R."/>
            <person name="Rogakou E.P."/>
            <person name="Orr A.H."/>
            <person name="Lowndes N.F."/>
            <person name="Bonner W.M."/>
        </authorList>
    </citation>
    <scope>FUNCTION</scope>
</reference>
<reference key="15">
    <citation type="journal article" date="2004" name="Cell">
        <title>Choreography of the DNA damage response: spatiotemporal relationships among checkpoint and repair proteins.</title>
        <authorList>
            <person name="Lisby M."/>
            <person name="Barlow J.H."/>
            <person name="Burgess R.C."/>
            <person name="Rothstein R."/>
        </authorList>
    </citation>
    <scope>FUNCTION</scope>
</reference>
<reference key="16">
    <citation type="journal article" date="2004" name="Curr. Biol.">
        <title>Distribution and dynamics of chromatin modification induced by a defined DNA double-strand break.</title>
        <authorList>
            <person name="Shroff R."/>
            <person name="Arbel-Eden A."/>
            <person name="Pilch D.R."/>
            <person name="Ira G."/>
            <person name="Bonner W.M."/>
            <person name="Petrini J.H.J."/>
            <person name="Haber J.E."/>
            <person name="Lichten M."/>
        </authorList>
    </citation>
    <scope>FUNCTION</scope>
</reference>
<reference key="17">
    <citation type="journal article" date="2004" name="EMBO J.">
        <title>Esc4p, a new target of Mec1p (ATR), promotes resumption of DNA synthesis after DNA damage.</title>
        <authorList>
            <person name="Rouse J."/>
        </authorList>
    </citation>
    <scope>PHOSPHORYLATION OF RTT107</scope>
</reference>
<reference key="18">
    <citation type="journal article" date="2005" name="Biochem. J.">
        <title>Slx4 becomes phosphorylated after DNA damage in a Mec1/Tel1-dependent manner and is required for repair of DNA alkylation damage.</title>
        <authorList>
            <person name="Flott S."/>
            <person name="Rouse J."/>
        </authorList>
    </citation>
    <scope>FUNCTION</scope>
    <scope>PHOSPHORYLATION OF SLX4</scope>
</reference>
<reference key="19">
    <citation type="journal article" date="2006" name="J. Biol. Chem.">
        <title>Activation of the checkpoint kinase Rad53 by the phosphatidyl inositol kinase-like kinase Mec1.</title>
        <authorList>
            <person name="Ma J.-L."/>
            <person name="Lee S.-J."/>
            <person name="Duong J.K."/>
            <person name="Stern D.F."/>
        </authorList>
    </citation>
    <scope>FUNCTION OF THE MEC1-LCD1 COMPLEX</scope>
    <scope>PHOSPHORYLATION OF LCD1 AND RAD53</scope>
</reference>
<reference key="20">
    <citation type="journal article" date="2005" name="Mol. Biol. Cell">
        <title>Role of the C-terminus of Mec1 checkpoint kinase in its localization to sites of DNA damage.</title>
        <authorList>
            <person name="Nakada D."/>
            <person name="Hirano Y."/>
            <person name="Tanaka Y."/>
            <person name="Sugimoto K."/>
        </authorList>
    </citation>
    <scope>FUNCTION</scope>
    <scope>INTERACTION WITH LCD1; RFA1 AND RFA2</scope>
    <scope>MUTAGENESIS OF 2360-MET--ILE-2362 AND 2367-PHE-TRP-2368</scope>
</reference>
<reference key="21">
    <citation type="journal article" date="2008" name="Mol. Cell. Proteomics">
        <title>A multidimensional chromatography technology for in-depth phosphoproteome analysis.</title>
        <authorList>
            <person name="Albuquerque C.P."/>
            <person name="Smolka M.B."/>
            <person name="Payne S.H."/>
            <person name="Bafna V."/>
            <person name="Eng J."/>
            <person name="Zhou H."/>
        </authorList>
    </citation>
    <scope>IDENTIFICATION BY MASS SPECTROMETRY [LARGE SCALE ANALYSIS]</scope>
</reference>
<dbReference type="EC" id="2.7.11.1"/>
<dbReference type="EMBL" id="X75891">
    <property type="protein sequence ID" value="CAA53494.1"/>
    <property type="molecule type" value="Genomic_DNA"/>
</dbReference>
<dbReference type="EMBL" id="U31109">
    <property type="protein sequence ID" value="AAA74482.1"/>
    <property type="molecule type" value="Genomic_DNA"/>
</dbReference>
<dbReference type="EMBL" id="D11088">
    <property type="protein sequence ID" value="BAA01860.1"/>
    <property type="molecule type" value="Genomic_DNA"/>
</dbReference>
<dbReference type="EMBL" id="Z36005">
    <property type="protein sequence ID" value="CAA85094.1"/>
    <property type="molecule type" value="Genomic_DNA"/>
</dbReference>
<dbReference type="EMBL" id="BK006936">
    <property type="protein sequence ID" value="DAA07252.1"/>
    <property type="molecule type" value="Genomic_DNA"/>
</dbReference>
<dbReference type="PIR" id="S46005">
    <property type="entry name" value="S46005"/>
</dbReference>
<dbReference type="RefSeq" id="NP_009694.3">
    <property type="nucleotide sequence ID" value="NM_001178484.3"/>
</dbReference>
<dbReference type="PDB" id="5X6O">
    <property type="method" value="EM"/>
    <property type="resolution" value="3.90 A"/>
    <property type="chains" value="C=1-2368"/>
</dbReference>
<dbReference type="PDB" id="6Z2W">
    <property type="method" value="EM"/>
    <property type="resolution" value="2.82 A"/>
    <property type="chains" value="E/F=1-2368"/>
</dbReference>
<dbReference type="PDB" id="6Z2X">
    <property type="method" value="EM"/>
    <property type="resolution" value="3.20 A"/>
    <property type="chains" value="E/F=1-2368"/>
</dbReference>
<dbReference type="PDB" id="6Z3A">
    <property type="method" value="EM"/>
    <property type="resolution" value="3.80 A"/>
    <property type="chains" value="E/F=1-2368"/>
</dbReference>
<dbReference type="PDB" id="7WZR">
    <property type="method" value="EM"/>
    <property type="resolution" value="4.70 A"/>
    <property type="chains" value="C/F=1-2368"/>
</dbReference>
<dbReference type="PDB" id="7WZW">
    <property type="method" value="EM"/>
    <property type="resolution" value="3.80 A"/>
    <property type="chains" value="E/F=1-2368"/>
</dbReference>
<dbReference type="PDBsum" id="5X6O"/>
<dbReference type="PDBsum" id="6Z2W"/>
<dbReference type="PDBsum" id="6Z2X"/>
<dbReference type="PDBsum" id="6Z3A"/>
<dbReference type="PDBsum" id="7WZR"/>
<dbReference type="PDBsum" id="7WZW"/>
<dbReference type="EMDB" id="EMD-11050"/>
<dbReference type="EMDB" id="EMD-11051"/>
<dbReference type="EMDB" id="EMD-11055"/>
<dbReference type="EMDB" id="EMD-32912"/>
<dbReference type="EMDB" id="EMD-32913"/>
<dbReference type="EMDB" id="EMD-6708"/>
<dbReference type="SMR" id="P38111"/>
<dbReference type="BioGRID" id="32836">
    <property type="interactions" value="679"/>
</dbReference>
<dbReference type="ComplexPortal" id="CPX-3621">
    <property type="entry name" value="ATR-ATRIP DNA damage-sensing kinase complex"/>
</dbReference>
<dbReference type="DIP" id="DIP-799N"/>
<dbReference type="FunCoup" id="P38111">
    <property type="interactions" value="1505"/>
</dbReference>
<dbReference type="IntAct" id="P38111">
    <property type="interactions" value="24"/>
</dbReference>
<dbReference type="MINT" id="P38111"/>
<dbReference type="STRING" id="4932.YBR136W"/>
<dbReference type="iPTMnet" id="P38111"/>
<dbReference type="PaxDb" id="4932-YBR136W"/>
<dbReference type="PeptideAtlas" id="P38111"/>
<dbReference type="EnsemblFungi" id="YBR136W_mRNA">
    <property type="protein sequence ID" value="YBR136W"/>
    <property type="gene ID" value="YBR136W"/>
</dbReference>
<dbReference type="GeneID" id="852433"/>
<dbReference type="KEGG" id="sce:YBR136W"/>
<dbReference type="AGR" id="SGD:S000000340"/>
<dbReference type="SGD" id="S000000340">
    <property type="gene designation" value="MEC1"/>
</dbReference>
<dbReference type="VEuPathDB" id="FungiDB:YBR136W"/>
<dbReference type="eggNOG" id="KOG0890">
    <property type="taxonomic scope" value="Eukaryota"/>
</dbReference>
<dbReference type="HOGENOM" id="CLU_000178_4_0_1"/>
<dbReference type="InParanoid" id="P38111"/>
<dbReference type="OMA" id="SMYIGWC"/>
<dbReference type="OrthoDB" id="381190at2759"/>
<dbReference type="BioCyc" id="YEAST:G3O-29090-MONOMER"/>
<dbReference type="BioGRID-ORCS" id="852433">
    <property type="hits" value="2 hits in 13 CRISPR screens"/>
</dbReference>
<dbReference type="PRO" id="PR:P38111"/>
<dbReference type="Proteomes" id="UP000002311">
    <property type="component" value="Chromosome II"/>
</dbReference>
<dbReference type="RNAct" id="P38111">
    <property type="molecule type" value="protein"/>
</dbReference>
<dbReference type="GO" id="GO:0070310">
    <property type="term" value="C:ATR-ATRIP complex"/>
    <property type="evidence" value="ECO:0000353"/>
    <property type="project" value="ComplexPortal"/>
</dbReference>
<dbReference type="GO" id="GO:0005694">
    <property type="term" value="C:chromosome"/>
    <property type="evidence" value="ECO:0000318"/>
    <property type="project" value="GO_Central"/>
</dbReference>
<dbReference type="GO" id="GO:0005739">
    <property type="term" value="C:mitochondrion"/>
    <property type="evidence" value="ECO:0007005"/>
    <property type="project" value="SGD"/>
</dbReference>
<dbReference type="GO" id="GO:0005634">
    <property type="term" value="C:nucleus"/>
    <property type="evidence" value="ECO:0000314"/>
    <property type="project" value="SGD"/>
</dbReference>
<dbReference type="GO" id="GO:0005524">
    <property type="term" value="F:ATP binding"/>
    <property type="evidence" value="ECO:0007669"/>
    <property type="project" value="UniProtKB-KW"/>
</dbReference>
<dbReference type="GO" id="GO:0004672">
    <property type="term" value="F:protein kinase activity"/>
    <property type="evidence" value="ECO:0000314"/>
    <property type="project" value="SGD"/>
</dbReference>
<dbReference type="GO" id="GO:0106310">
    <property type="term" value="F:protein serine kinase activity"/>
    <property type="evidence" value="ECO:0007669"/>
    <property type="project" value="RHEA"/>
</dbReference>
<dbReference type="GO" id="GO:0004674">
    <property type="term" value="F:protein serine/threonine kinase activity"/>
    <property type="evidence" value="ECO:0000318"/>
    <property type="project" value="GO_Central"/>
</dbReference>
<dbReference type="GO" id="GO:0006325">
    <property type="term" value="P:chromatin organization"/>
    <property type="evidence" value="ECO:0007669"/>
    <property type="project" value="UniProtKB-KW"/>
</dbReference>
<dbReference type="GO" id="GO:0000077">
    <property type="term" value="P:DNA damage checkpoint signaling"/>
    <property type="evidence" value="ECO:0000318"/>
    <property type="project" value="GO_Central"/>
</dbReference>
<dbReference type="GO" id="GO:0006310">
    <property type="term" value="P:DNA recombination"/>
    <property type="evidence" value="ECO:0000315"/>
    <property type="project" value="SGD"/>
</dbReference>
<dbReference type="GO" id="GO:0006281">
    <property type="term" value="P:DNA repair"/>
    <property type="evidence" value="ECO:0000318"/>
    <property type="project" value="GO_Central"/>
</dbReference>
<dbReference type="GO" id="GO:0006260">
    <property type="term" value="P:DNA replication"/>
    <property type="evidence" value="ECO:0000315"/>
    <property type="project" value="SGD"/>
</dbReference>
<dbReference type="GO" id="GO:0006139">
    <property type="term" value="P:nucleobase-containing compound metabolic process"/>
    <property type="evidence" value="ECO:0000303"/>
    <property type="project" value="ComplexPortal"/>
</dbReference>
<dbReference type="GO" id="GO:2000105">
    <property type="term" value="P:positive regulation of DNA-templated DNA replication"/>
    <property type="evidence" value="ECO:0000315"/>
    <property type="project" value="SGD"/>
</dbReference>
<dbReference type="GO" id="GO:0007131">
    <property type="term" value="P:reciprocal meiotic recombination"/>
    <property type="evidence" value="ECO:0000315"/>
    <property type="project" value="SGD"/>
</dbReference>
<dbReference type="GO" id="GO:2000779">
    <property type="term" value="P:regulation of double-strand break repair"/>
    <property type="evidence" value="ECO:0000303"/>
    <property type="project" value="ComplexPortal"/>
</dbReference>
<dbReference type="GO" id="GO:0042770">
    <property type="term" value="P:signal transduction in response to DNA damage"/>
    <property type="evidence" value="ECO:0000315"/>
    <property type="project" value="SGD"/>
</dbReference>
<dbReference type="GO" id="GO:0000723">
    <property type="term" value="P:telomere maintenance"/>
    <property type="evidence" value="ECO:0000314"/>
    <property type="project" value="SGD"/>
</dbReference>
<dbReference type="GO" id="GO:0000722">
    <property type="term" value="P:telomere maintenance via recombination"/>
    <property type="evidence" value="ECO:0000316"/>
    <property type="project" value="SGD"/>
</dbReference>
<dbReference type="CDD" id="cd00892">
    <property type="entry name" value="PIKKc_ATR"/>
    <property type="match status" value="1"/>
</dbReference>
<dbReference type="DisProt" id="DP02671"/>
<dbReference type="FunFam" id="3.30.1010.10:FF:000037">
    <property type="entry name" value="MEC1p protein"/>
    <property type="match status" value="1"/>
</dbReference>
<dbReference type="FunFam" id="1.10.1070.11:FF:000033">
    <property type="entry name" value="Serine/threonine-protein kinase MEC1"/>
    <property type="match status" value="1"/>
</dbReference>
<dbReference type="Gene3D" id="1.10.1070.11">
    <property type="entry name" value="Phosphatidylinositol 3-/4-kinase, catalytic domain"/>
    <property type="match status" value="1"/>
</dbReference>
<dbReference type="Gene3D" id="3.30.1010.10">
    <property type="entry name" value="Phosphatidylinositol 3-kinase Catalytic Subunit, Chain A, domain 4"/>
    <property type="match status" value="1"/>
</dbReference>
<dbReference type="Gene3D" id="1.25.40.10">
    <property type="entry name" value="Tetratricopeptide repeat domain"/>
    <property type="match status" value="1"/>
</dbReference>
<dbReference type="InterPro" id="IPR016024">
    <property type="entry name" value="ARM-type_fold"/>
</dbReference>
<dbReference type="InterPro" id="IPR056802">
    <property type="entry name" value="ATR-like_M-HEAT"/>
</dbReference>
<dbReference type="InterPro" id="IPR050517">
    <property type="entry name" value="DDR_Repair_Kinase"/>
</dbReference>
<dbReference type="InterPro" id="IPR003152">
    <property type="entry name" value="FATC_dom"/>
</dbReference>
<dbReference type="InterPro" id="IPR011009">
    <property type="entry name" value="Kinase-like_dom_sf"/>
</dbReference>
<dbReference type="InterPro" id="IPR000403">
    <property type="entry name" value="PI3/4_kinase_cat_dom"/>
</dbReference>
<dbReference type="InterPro" id="IPR036940">
    <property type="entry name" value="PI3/4_kinase_cat_sf"/>
</dbReference>
<dbReference type="InterPro" id="IPR018936">
    <property type="entry name" value="PI3/4_kinase_CS"/>
</dbReference>
<dbReference type="InterPro" id="IPR003151">
    <property type="entry name" value="PIK-rel_kinase_FAT"/>
</dbReference>
<dbReference type="InterPro" id="IPR014009">
    <property type="entry name" value="PIK_FAT"/>
</dbReference>
<dbReference type="InterPro" id="IPR011990">
    <property type="entry name" value="TPR-like_helical_dom_sf"/>
</dbReference>
<dbReference type="InterPro" id="IPR012993">
    <property type="entry name" value="UME"/>
</dbReference>
<dbReference type="PANTHER" id="PTHR11139">
    <property type="entry name" value="ATAXIA TELANGIECTASIA MUTATED ATM -RELATED"/>
    <property type="match status" value="1"/>
</dbReference>
<dbReference type="PANTHER" id="PTHR11139:SF125">
    <property type="entry name" value="SERINE_THREONINE-PROTEIN KINASE MEC1"/>
    <property type="match status" value="1"/>
</dbReference>
<dbReference type="Pfam" id="PF02259">
    <property type="entry name" value="FAT"/>
    <property type="match status" value="1"/>
</dbReference>
<dbReference type="Pfam" id="PF02260">
    <property type="entry name" value="FATC"/>
    <property type="match status" value="1"/>
</dbReference>
<dbReference type="Pfam" id="PF23593">
    <property type="entry name" value="HEAT_ATR"/>
    <property type="match status" value="1"/>
</dbReference>
<dbReference type="Pfam" id="PF25385">
    <property type="entry name" value="HEAT_MEC1_N"/>
    <property type="match status" value="1"/>
</dbReference>
<dbReference type="Pfam" id="PF25030">
    <property type="entry name" value="M-HEAT_ATR"/>
    <property type="match status" value="1"/>
</dbReference>
<dbReference type="Pfam" id="PF00454">
    <property type="entry name" value="PI3_PI4_kinase"/>
    <property type="match status" value="1"/>
</dbReference>
<dbReference type="Pfam" id="PF08064">
    <property type="entry name" value="UME"/>
    <property type="match status" value="1"/>
</dbReference>
<dbReference type="SMART" id="SM01343">
    <property type="entry name" value="FATC"/>
    <property type="match status" value="1"/>
</dbReference>
<dbReference type="SMART" id="SM00146">
    <property type="entry name" value="PI3Kc"/>
    <property type="match status" value="1"/>
</dbReference>
<dbReference type="SMART" id="SM00802">
    <property type="entry name" value="UME"/>
    <property type="match status" value="1"/>
</dbReference>
<dbReference type="SUPFAM" id="SSF48371">
    <property type="entry name" value="ARM repeat"/>
    <property type="match status" value="1"/>
</dbReference>
<dbReference type="SUPFAM" id="SSF56112">
    <property type="entry name" value="Protein kinase-like (PK-like)"/>
    <property type="match status" value="1"/>
</dbReference>
<dbReference type="PROSITE" id="PS51189">
    <property type="entry name" value="FAT"/>
    <property type="match status" value="1"/>
</dbReference>
<dbReference type="PROSITE" id="PS51190">
    <property type="entry name" value="FATC"/>
    <property type="match status" value="1"/>
</dbReference>
<dbReference type="PROSITE" id="PS00915">
    <property type="entry name" value="PI3_4_KINASE_1"/>
    <property type="match status" value="1"/>
</dbReference>
<dbReference type="PROSITE" id="PS00916">
    <property type="entry name" value="PI3_4_KINASE_2"/>
    <property type="match status" value="1"/>
</dbReference>
<dbReference type="PROSITE" id="PS50290">
    <property type="entry name" value="PI3_4_KINASE_3"/>
    <property type="match status" value="1"/>
</dbReference>
<name>ATR_YEAST</name>
<feature type="chain" id="PRO_0000088836" description="Serine/threonine-protein kinase MEC1">
    <location>
        <begin position="1"/>
        <end position="2368"/>
    </location>
</feature>
<feature type="domain" description="FAT" evidence="2">
    <location>
        <begin position="1399"/>
        <end position="1944"/>
    </location>
</feature>
<feature type="domain" description="PI3K/PI4K catalytic" evidence="1">
    <location>
        <begin position="2049"/>
        <end position="2352"/>
    </location>
</feature>
<feature type="domain" description="FATC" evidence="2 3">
    <location>
        <begin position="2336"/>
        <end position="2368"/>
    </location>
</feature>
<feature type="region of interest" description="G-loop" evidence="1">
    <location>
        <begin position="2055"/>
        <end position="2061"/>
    </location>
</feature>
<feature type="region of interest" description="Binding to the RPA complex">
    <location>
        <begin position="2140"/>
        <end position="2368"/>
    </location>
</feature>
<feature type="region of interest" description="Catalytic loop" evidence="1">
    <location>
        <begin position="2221"/>
        <end position="2229"/>
    </location>
</feature>
<feature type="region of interest" description="Activation loop" evidence="1">
    <location>
        <begin position="2241"/>
        <end position="2265"/>
    </location>
</feature>
<feature type="mutagenesis site" description="In MEC1-101; impairs both the G1/S and intra-S damage checkpoints but not the G2/M damage checkpoint; when associated with P-552 and S-781." evidence="8">
    <original>V</original>
    <variation>G</variation>
    <location>
        <position position="225"/>
    </location>
</feature>
<feature type="mutagenesis site" description="In MEC1-101; impairs both the G1/S and intra-S damage checkpoints but not the G2/M damage checkpoint; when associated with S-225 and S-781." evidence="8">
    <original>S</original>
    <variation>P</variation>
    <location>
        <position position="552"/>
    </location>
</feature>
<feature type="mutagenesis site" description="In MEC1-101; impairs both the G1/S and intra-S damage checkpoints but not the G2/M damage checkpoint; when associated with S-225 and P-552." evidence="8">
    <original>L</original>
    <variation>S</variation>
    <location>
        <position position="781"/>
    </location>
</feature>
<feature type="mutagenesis site" description="In MEC1-100; impairs both the G1/S and intra-S damage checkpoints but not the G2/M damage checkpoint; when associated with S-1700." evidence="8">
    <original>F</original>
    <variation>S</variation>
    <location>
        <position position="1179"/>
    </location>
</feature>
<feature type="mutagenesis site" description="In MEC1-100; impairs both the G1/S and intra-S damage checkpoints but not the G2/M damage checkpoint; when associated with S-1179." evidence="8">
    <original>N</original>
    <variation>S</variation>
    <location>
        <position position="1700"/>
    </location>
</feature>
<feature type="mutagenesis site" description="Impairs kinase activity; when associated with K-2229." evidence="6 8">
    <original>D</original>
    <variation>A</variation>
    <location>
        <position position="2224"/>
    </location>
</feature>
<feature type="mutagenesis site" description="Impairs kinase activity; when associated with A-2224." evidence="6">
    <original>N</original>
    <variation>K</variation>
    <location>
        <position position="2229"/>
    </location>
</feature>
<feature type="mutagenesis site" description="Impairs kinase activity." evidence="8">
    <original>D</original>
    <variation>E</variation>
    <location>
        <position position="2243"/>
    </location>
</feature>
<feature type="mutagenesis site" description="In MEC1-85; disrupts interaction with RFA1 and severely impairs kinase activity." evidence="14">
    <original>MYI</original>
    <variation>AAA</variation>
    <location>
        <begin position="2360"/>
        <end position="2362"/>
    </location>
</feature>
<feature type="mutagenesis site" description="In MEC1-87; decreases the level of MEC1 and impairs viability." evidence="14">
    <original>FW</original>
    <variation>AA</variation>
    <location>
        <begin position="2367"/>
        <end position="2368"/>
    </location>
</feature>
<feature type="sequence conflict" description="In Ref. 1; BAA01860." evidence="18" ref="1">
    <original>N</original>
    <variation>D</variation>
    <location>
        <position position="197"/>
    </location>
</feature>
<feature type="sequence conflict" description="In Ref. 2; AAA74482." evidence="18" ref="2">
    <original>S</original>
    <variation>P</variation>
    <location>
        <position position="716"/>
    </location>
</feature>
<feature type="sequence conflict" description="In Ref. 2; AAA74482." evidence="18" ref="2">
    <original>K</original>
    <variation>Q</variation>
    <location>
        <position position="1255"/>
    </location>
</feature>
<feature type="sequence conflict" description="In Ref. 2; AAA74482." evidence="18" ref="2">
    <original>L</original>
    <variation>G</variation>
    <location>
        <position position="1276"/>
    </location>
</feature>
<feature type="helix" evidence="19">
    <location>
        <begin position="5"/>
        <end position="17"/>
    </location>
</feature>
<feature type="strand" evidence="19">
    <location>
        <begin position="21"/>
        <end position="23"/>
    </location>
</feature>
<feature type="helix" evidence="19">
    <location>
        <begin position="48"/>
        <end position="55"/>
    </location>
</feature>
<feature type="turn" evidence="19">
    <location>
        <begin position="56"/>
        <end position="58"/>
    </location>
</feature>
<feature type="strand" evidence="19">
    <location>
        <begin position="61"/>
        <end position="63"/>
    </location>
</feature>
<feature type="helix" evidence="19">
    <location>
        <begin position="68"/>
        <end position="82"/>
    </location>
</feature>
<feature type="turn" evidence="19">
    <location>
        <begin position="85"/>
        <end position="89"/>
    </location>
</feature>
<feature type="turn" evidence="19">
    <location>
        <begin position="93"/>
        <end position="95"/>
    </location>
</feature>
<feature type="helix" evidence="19">
    <location>
        <begin position="99"/>
        <end position="112"/>
    </location>
</feature>
<feature type="helix" evidence="19">
    <location>
        <begin position="118"/>
        <end position="129"/>
    </location>
</feature>
<feature type="turn" evidence="19">
    <location>
        <begin position="130"/>
        <end position="134"/>
    </location>
</feature>
<feature type="turn" evidence="19">
    <location>
        <begin position="136"/>
        <end position="138"/>
    </location>
</feature>
<feature type="helix" evidence="19">
    <location>
        <begin position="140"/>
        <end position="143"/>
    </location>
</feature>
<feature type="turn" evidence="19">
    <location>
        <begin position="144"/>
        <end position="148"/>
    </location>
</feature>
<feature type="helix" evidence="19">
    <location>
        <begin position="149"/>
        <end position="160"/>
    </location>
</feature>
<feature type="helix" evidence="19">
    <location>
        <begin position="162"/>
        <end position="164"/>
    </location>
</feature>
<feature type="strand" evidence="19">
    <location>
        <begin position="165"/>
        <end position="167"/>
    </location>
</feature>
<feature type="helix" evidence="19">
    <location>
        <begin position="172"/>
        <end position="188"/>
    </location>
</feature>
<feature type="turn" evidence="19">
    <location>
        <begin position="192"/>
        <end position="194"/>
    </location>
</feature>
<feature type="strand" evidence="19">
    <location>
        <begin position="197"/>
        <end position="199"/>
    </location>
</feature>
<feature type="helix" evidence="20">
    <location>
        <begin position="200"/>
        <end position="202"/>
    </location>
</feature>
<feature type="helix" evidence="19">
    <location>
        <begin position="210"/>
        <end position="228"/>
    </location>
</feature>
<feature type="helix" evidence="19">
    <location>
        <begin position="234"/>
        <end position="252"/>
    </location>
</feature>
<feature type="strand" evidence="19">
    <location>
        <begin position="259"/>
        <end position="261"/>
    </location>
</feature>
<feature type="helix" evidence="19">
    <location>
        <begin position="268"/>
        <end position="283"/>
    </location>
</feature>
<feature type="helix" evidence="19">
    <location>
        <begin position="294"/>
        <end position="304"/>
    </location>
</feature>
<feature type="strand" evidence="19">
    <location>
        <begin position="307"/>
        <end position="309"/>
    </location>
</feature>
<feature type="helix" evidence="19">
    <location>
        <begin position="312"/>
        <end position="318"/>
    </location>
</feature>
<feature type="strand" evidence="19">
    <location>
        <begin position="333"/>
        <end position="335"/>
    </location>
</feature>
<feature type="helix" evidence="19">
    <location>
        <begin position="337"/>
        <end position="354"/>
    </location>
</feature>
<feature type="helix" evidence="20">
    <location>
        <begin position="357"/>
        <end position="359"/>
    </location>
</feature>
<feature type="strand" evidence="19">
    <location>
        <begin position="360"/>
        <end position="362"/>
    </location>
</feature>
<feature type="strand" evidence="19">
    <location>
        <begin position="364"/>
        <end position="366"/>
    </location>
</feature>
<feature type="strand" evidence="19">
    <location>
        <begin position="369"/>
        <end position="371"/>
    </location>
</feature>
<feature type="turn" evidence="19">
    <location>
        <begin position="380"/>
        <end position="382"/>
    </location>
</feature>
<feature type="helix" evidence="19">
    <location>
        <begin position="391"/>
        <end position="402"/>
    </location>
</feature>
<feature type="helix" evidence="19">
    <location>
        <begin position="403"/>
        <end position="405"/>
    </location>
</feature>
<feature type="helix" evidence="19">
    <location>
        <begin position="412"/>
        <end position="418"/>
    </location>
</feature>
<feature type="strand" evidence="19">
    <location>
        <begin position="421"/>
        <end position="423"/>
    </location>
</feature>
<feature type="strand" evidence="19">
    <location>
        <begin position="426"/>
        <end position="428"/>
    </location>
</feature>
<feature type="helix" evidence="19">
    <location>
        <begin position="432"/>
        <end position="444"/>
    </location>
</feature>
<feature type="helix" evidence="19">
    <location>
        <begin position="454"/>
        <end position="470"/>
    </location>
</feature>
<feature type="turn" evidence="19">
    <location>
        <begin position="471"/>
        <end position="473"/>
    </location>
</feature>
<feature type="strand" evidence="20">
    <location>
        <begin position="484"/>
        <end position="486"/>
    </location>
</feature>
<feature type="turn" evidence="19">
    <location>
        <begin position="491"/>
        <end position="494"/>
    </location>
</feature>
<feature type="strand" evidence="19">
    <location>
        <begin position="503"/>
        <end position="505"/>
    </location>
</feature>
<feature type="turn" evidence="19">
    <location>
        <begin position="512"/>
        <end position="515"/>
    </location>
</feature>
<feature type="helix" evidence="19">
    <location>
        <begin position="517"/>
        <end position="525"/>
    </location>
</feature>
<feature type="turn" evidence="19">
    <location>
        <begin position="526"/>
        <end position="528"/>
    </location>
</feature>
<feature type="helix" evidence="19">
    <location>
        <begin position="532"/>
        <end position="534"/>
    </location>
</feature>
<feature type="helix" evidence="19">
    <location>
        <begin position="537"/>
        <end position="553"/>
    </location>
</feature>
<feature type="strand" evidence="19">
    <location>
        <begin position="562"/>
        <end position="564"/>
    </location>
</feature>
<feature type="helix" evidence="19">
    <location>
        <begin position="570"/>
        <end position="577"/>
    </location>
</feature>
<feature type="helix" evidence="19">
    <location>
        <begin position="582"/>
        <end position="588"/>
    </location>
</feature>
<feature type="turn" evidence="19">
    <location>
        <begin position="589"/>
        <end position="591"/>
    </location>
</feature>
<feature type="helix" evidence="19">
    <location>
        <begin position="592"/>
        <end position="595"/>
    </location>
</feature>
<feature type="strand" evidence="19">
    <location>
        <begin position="599"/>
        <end position="602"/>
    </location>
</feature>
<feature type="helix" evidence="19">
    <location>
        <begin position="607"/>
        <end position="615"/>
    </location>
</feature>
<feature type="helix" evidence="19">
    <location>
        <begin position="621"/>
        <end position="623"/>
    </location>
</feature>
<feature type="helix" evidence="19">
    <location>
        <begin position="624"/>
        <end position="635"/>
    </location>
</feature>
<feature type="helix" evidence="19">
    <location>
        <begin position="640"/>
        <end position="654"/>
    </location>
</feature>
<feature type="helix" evidence="19">
    <location>
        <begin position="659"/>
        <end position="675"/>
    </location>
</feature>
<feature type="helix" evidence="19">
    <location>
        <begin position="681"/>
        <end position="684"/>
    </location>
</feature>
<feature type="turn" evidence="19">
    <location>
        <begin position="685"/>
        <end position="687"/>
    </location>
</feature>
<feature type="helix" evidence="19">
    <location>
        <begin position="688"/>
        <end position="691"/>
    </location>
</feature>
<feature type="helix" evidence="19">
    <location>
        <begin position="694"/>
        <end position="696"/>
    </location>
</feature>
<feature type="turn" evidence="19">
    <location>
        <begin position="699"/>
        <end position="702"/>
    </location>
</feature>
<feature type="helix" evidence="19">
    <location>
        <begin position="703"/>
        <end position="713"/>
    </location>
</feature>
<feature type="helix" evidence="19">
    <location>
        <begin position="719"/>
        <end position="723"/>
    </location>
</feature>
<feature type="helix" evidence="19">
    <location>
        <begin position="725"/>
        <end position="732"/>
    </location>
</feature>
<feature type="helix" evidence="19">
    <location>
        <begin position="741"/>
        <end position="748"/>
    </location>
</feature>
<feature type="strand" evidence="20">
    <location>
        <begin position="751"/>
        <end position="754"/>
    </location>
</feature>
<feature type="helix" evidence="19">
    <location>
        <begin position="756"/>
        <end position="764"/>
    </location>
</feature>
<feature type="helix" evidence="19">
    <location>
        <begin position="768"/>
        <end position="777"/>
    </location>
</feature>
<feature type="helix" evidence="19">
    <location>
        <begin position="784"/>
        <end position="792"/>
    </location>
</feature>
<feature type="strand" evidence="19">
    <location>
        <begin position="801"/>
        <end position="803"/>
    </location>
</feature>
<feature type="strand" evidence="20">
    <location>
        <begin position="807"/>
        <end position="809"/>
    </location>
</feature>
<feature type="helix" evidence="19">
    <location>
        <begin position="810"/>
        <end position="817"/>
    </location>
</feature>
<feature type="helix" evidence="19">
    <location>
        <begin position="828"/>
        <end position="844"/>
    </location>
</feature>
<feature type="strand" evidence="19">
    <location>
        <begin position="845"/>
        <end position="850"/>
    </location>
</feature>
<feature type="helix" evidence="19">
    <location>
        <begin position="856"/>
        <end position="859"/>
    </location>
</feature>
<feature type="helix" evidence="20">
    <location>
        <begin position="866"/>
        <end position="868"/>
    </location>
</feature>
<feature type="helix" evidence="19">
    <location>
        <begin position="869"/>
        <end position="877"/>
    </location>
</feature>
<feature type="helix" evidence="19">
    <location>
        <begin position="881"/>
        <end position="891"/>
    </location>
</feature>
<feature type="helix" evidence="19">
    <location>
        <begin position="900"/>
        <end position="915"/>
    </location>
</feature>
<feature type="helix" evidence="19">
    <location>
        <begin position="920"/>
        <end position="924"/>
    </location>
</feature>
<feature type="helix" evidence="19">
    <location>
        <begin position="926"/>
        <end position="938"/>
    </location>
</feature>
<feature type="helix" evidence="19">
    <location>
        <begin position="943"/>
        <end position="955"/>
    </location>
</feature>
<feature type="helix" evidence="19">
    <location>
        <begin position="960"/>
        <end position="962"/>
    </location>
</feature>
<feature type="turn" evidence="19">
    <location>
        <begin position="963"/>
        <end position="965"/>
    </location>
</feature>
<feature type="helix" evidence="19">
    <location>
        <begin position="967"/>
        <end position="975"/>
    </location>
</feature>
<feature type="helix" evidence="19">
    <location>
        <begin position="982"/>
        <end position="997"/>
    </location>
</feature>
<feature type="helix" evidence="19">
    <location>
        <begin position="1000"/>
        <end position="1004"/>
    </location>
</feature>
<feature type="helix" evidence="19">
    <location>
        <begin position="1009"/>
        <end position="1015"/>
    </location>
</feature>
<feature type="turn" evidence="19">
    <location>
        <begin position="1018"/>
        <end position="1020"/>
    </location>
</feature>
<feature type="helix" evidence="19">
    <location>
        <begin position="1023"/>
        <end position="1026"/>
    </location>
</feature>
<feature type="helix" evidence="19">
    <location>
        <begin position="1029"/>
        <end position="1036"/>
    </location>
</feature>
<feature type="helix" evidence="19">
    <location>
        <begin position="1044"/>
        <end position="1047"/>
    </location>
</feature>
<feature type="turn" evidence="19">
    <location>
        <begin position="1048"/>
        <end position="1051"/>
    </location>
</feature>
<feature type="helix" evidence="19">
    <location>
        <begin position="1057"/>
        <end position="1075"/>
    </location>
</feature>
<feature type="helix" evidence="19">
    <location>
        <begin position="1091"/>
        <end position="1104"/>
    </location>
</feature>
<feature type="turn" evidence="19">
    <location>
        <begin position="1105"/>
        <end position="1107"/>
    </location>
</feature>
<feature type="helix" evidence="19">
    <location>
        <begin position="1110"/>
        <end position="1123"/>
    </location>
</feature>
<feature type="strand" evidence="19">
    <location>
        <begin position="1128"/>
        <end position="1130"/>
    </location>
</feature>
<feature type="strand" evidence="19">
    <location>
        <begin position="1138"/>
        <end position="1140"/>
    </location>
</feature>
<feature type="strand" evidence="19">
    <location>
        <begin position="1146"/>
        <end position="1148"/>
    </location>
</feature>
<feature type="helix" evidence="19">
    <location>
        <begin position="1149"/>
        <end position="1162"/>
    </location>
</feature>
<feature type="helix" evidence="19">
    <location>
        <begin position="1164"/>
        <end position="1169"/>
    </location>
</feature>
<feature type="helix" evidence="19">
    <location>
        <begin position="1174"/>
        <end position="1190"/>
    </location>
</feature>
<feature type="strand" evidence="19">
    <location>
        <begin position="1194"/>
        <end position="1196"/>
    </location>
</feature>
<feature type="turn" evidence="19">
    <location>
        <begin position="1199"/>
        <end position="1202"/>
    </location>
</feature>
<feature type="helix" evidence="19">
    <location>
        <begin position="1207"/>
        <end position="1213"/>
    </location>
</feature>
<feature type="helix" evidence="19">
    <location>
        <begin position="1218"/>
        <end position="1224"/>
    </location>
</feature>
<feature type="helix" evidence="19">
    <location>
        <begin position="1226"/>
        <end position="1228"/>
    </location>
</feature>
<feature type="turn" evidence="19">
    <location>
        <begin position="1250"/>
        <end position="1252"/>
    </location>
</feature>
<feature type="helix" evidence="19">
    <location>
        <begin position="1254"/>
        <end position="1266"/>
    </location>
</feature>
<feature type="turn" evidence="19">
    <location>
        <begin position="1271"/>
        <end position="1273"/>
    </location>
</feature>
<feature type="helix" evidence="19">
    <location>
        <begin position="1278"/>
        <end position="1282"/>
    </location>
</feature>
<feature type="helix" evidence="19">
    <location>
        <begin position="1289"/>
        <end position="1303"/>
    </location>
</feature>
<feature type="turn" evidence="19">
    <location>
        <begin position="1311"/>
        <end position="1315"/>
    </location>
</feature>
<feature type="helix" evidence="19">
    <location>
        <begin position="1316"/>
        <end position="1327"/>
    </location>
</feature>
<feature type="strand" evidence="19">
    <location>
        <begin position="1332"/>
        <end position="1334"/>
    </location>
</feature>
<feature type="helix" evidence="19">
    <location>
        <begin position="1338"/>
        <end position="1369"/>
    </location>
</feature>
<feature type="strand" evidence="19">
    <location>
        <begin position="1373"/>
        <end position="1375"/>
    </location>
</feature>
<feature type="strand" evidence="19">
    <location>
        <begin position="1378"/>
        <end position="1380"/>
    </location>
</feature>
<feature type="helix" evidence="19">
    <location>
        <begin position="1381"/>
        <end position="1391"/>
    </location>
</feature>
<feature type="strand" evidence="20">
    <location>
        <begin position="1392"/>
        <end position="1395"/>
    </location>
</feature>
<feature type="strand" evidence="19">
    <location>
        <begin position="1397"/>
        <end position="1399"/>
    </location>
</feature>
<feature type="helix" evidence="19">
    <location>
        <begin position="1400"/>
        <end position="1404"/>
    </location>
</feature>
<feature type="turn" evidence="19">
    <location>
        <begin position="1405"/>
        <end position="1408"/>
    </location>
</feature>
<feature type="helix" evidence="19">
    <location>
        <begin position="1410"/>
        <end position="1422"/>
    </location>
</feature>
<feature type="turn" evidence="19">
    <location>
        <begin position="1431"/>
        <end position="1439"/>
    </location>
</feature>
<feature type="helix" evidence="19">
    <location>
        <begin position="1440"/>
        <end position="1443"/>
    </location>
</feature>
<feature type="helix" evidence="19">
    <location>
        <begin position="1451"/>
        <end position="1455"/>
    </location>
</feature>
<feature type="helix" evidence="19">
    <location>
        <begin position="1463"/>
        <end position="1467"/>
    </location>
</feature>
<feature type="helix" evidence="19">
    <location>
        <begin position="1468"/>
        <end position="1472"/>
    </location>
</feature>
<feature type="helix" evidence="19">
    <location>
        <begin position="1476"/>
        <end position="1486"/>
    </location>
</feature>
<feature type="helix" evidence="19">
    <location>
        <begin position="1494"/>
        <end position="1505"/>
    </location>
</feature>
<feature type="helix" evidence="19">
    <location>
        <begin position="1509"/>
        <end position="1513"/>
    </location>
</feature>
<feature type="turn" evidence="19">
    <location>
        <begin position="1516"/>
        <end position="1518"/>
    </location>
</feature>
<feature type="strand" evidence="19">
    <location>
        <begin position="1520"/>
        <end position="1523"/>
    </location>
</feature>
<feature type="helix" evidence="19">
    <location>
        <begin position="1531"/>
        <end position="1544"/>
    </location>
</feature>
<feature type="helix" evidence="19">
    <location>
        <begin position="1548"/>
        <end position="1552"/>
    </location>
</feature>
<feature type="helix" evidence="19">
    <location>
        <begin position="1554"/>
        <end position="1558"/>
    </location>
</feature>
<feature type="helix" evidence="19">
    <location>
        <begin position="1567"/>
        <end position="1583"/>
    </location>
</feature>
<feature type="helix" evidence="19">
    <location>
        <begin position="1587"/>
        <end position="1603"/>
    </location>
</feature>
<feature type="turn" evidence="19">
    <location>
        <begin position="1609"/>
        <end position="1611"/>
    </location>
</feature>
<feature type="turn" evidence="19">
    <location>
        <begin position="1615"/>
        <end position="1617"/>
    </location>
</feature>
<feature type="helix" evidence="19">
    <location>
        <begin position="1618"/>
        <end position="1634"/>
    </location>
</feature>
<feature type="helix" evidence="19">
    <location>
        <begin position="1639"/>
        <end position="1652"/>
    </location>
</feature>
<feature type="helix" evidence="19">
    <location>
        <begin position="1660"/>
        <end position="1674"/>
    </location>
</feature>
<feature type="helix" evidence="19">
    <location>
        <begin position="1680"/>
        <end position="1699"/>
    </location>
</feature>
<feature type="helix" evidence="19">
    <location>
        <begin position="1703"/>
        <end position="1710"/>
    </location>
</feature>
<feature type="helix" evidence="19">
    <location>
        <begin position="1712"/>
        <end position="1715"/>
    </location>
</feature>
<feature type="helix" evidence="19">
    <location>
        <begin position="1721"/>
        <end position="1732"/>
    </location>
</feature>
<feature type="helix" evidence="19">
    <location>
        <begin position="1735"/>
        <end position="1746"/>
    </location>
</feature>
<feature type="helix" evidence="19">
    <location>
        <begin position="1747"/>
        <end position="1750"/>
    </location>
</feature>
<feature type="turn" evidence="19">
    <location>
        <begin position="1756"/>
        <end position="1760"/>
    </location>
</feature>
<feature type="helix" evidence="19">
    <location>
        <begin position="1761"/>
        <end position="1772"/>
    </location>
</feature>
<feature type="turn" evidence="19">
    <location>
        <begin position="1773"/>
        <end position="1775"/>
    </location>
</feature>
<feature type="helix" evidence="19">
    <location>
        <begin position="1779"/>
        <end position="1792"/>
    </location>
</feature>
<feature type="helix" evidence="19">
    <location>
        <begin position="1798"/>
        <end position="1815"/>
    </location>
</feature>
<feature type="helix" evidence="19">
    <location>
        <begin position="1824"/>
        <end position="1836"/>
    </location>
</feature>
<feature type="turn" evidence="19">
    <location>
        <begin position="1837"/>
        <end position="1839"/>
    </location>
</feature>
<feature type="turn" evidence="19">
    <location>
        <begin position="1845"/>
        <end position="1847"/>
    </location>
</feature>
<feature type="helix" evidence="19">
    <location>
        <begin position="1848"/>
        <end position="1864"/>
    </location>
</feature>
<feature type="helix" evidence="19">
    <location>
        <begin position="1873"/>
        <end position="1890"/>
    </location>
</feature>
<feature type="helix" evidence="19">
    <location>
        <begin position="1895"/>
        <end position="1900"/>
    </location>
</feature>
<feature type="helix" evidence="19">
    <location>
        <begin position="1901"/>
        <end position="1905"/>
    </location>
</feature>
<feature type="strand" evidence="19">
    <location>
        <begin position="1913"/>
        <end position="1915"/>
    </location>
</feature>
<feature type="helix" evidence="19">
    <location>
        <begin position="1916"/>
        <end position="1928"/>
    </location>
</feature>
<feature type="helix" evidence="19">
    <location>
        <begin position="1931"/>
        <end position="1941"/>
    </location>
</feature>
<feature type="helix" evidence="19">
    <location>
        <begin position="1949"/>
        <end position="1962"/>
    </location>
</feature>
<feature type="helix" evidence="19">
    <location>
        <begin position="1970"/>
        <end position="1983"/>
    </location>
</feature>
<feature type="turn" evidence="19">
    <location>
        <begin position="1984"/>
        <end position="1986"/>
    </location>
</feature>
<feature type="strand" evidence="19">
    <location>
        <begin position="2014"/>
        <end position="2016"/>
    </location>
</feature>
<feature type="helix" evidence="19">
    <location>
        <begin position="2020"/>
        <end position="2023"/>
    </location>
</feature>
<feature type="strand" evidence="19">
    <location>
        <begin position="2057"/>
        <end position="2060"/>
    </location>
</feature>
<feature type="strand" evidence="19">
    <location>
        <begin position="2063"/>
        <end position="2068"/>
    </location>
</feature>
<feature type="strand" evidence="19">
    <location>
        <begin position="2074"/>
        <end position="2082"/>
    </location>
</feature>
<feature type="helix" evidence="19">
    <location>
        <begin position="2085"/>
        <end position="2101"/>
    </location>
</feature>
<feature type="helix" evidence="19">
    <location>
        <begin position="2105"/>
        <end position="2108"/>
    </location>
</feature>
<feature type="turn" evidence="19">
    <location>
        <begin position="2109"/>
        <end position="2111"/>
    </location>
</feature>
<feature type="strand" evidence="19">
    <location>
        <begin position="2119"/>
        <end position="2121"/>
    </location>
</feature>
<feature type="strand" evidence="19">
    <location>
        <begin position="2127"/>
        <end position="2131"/>
    </location>
</feature>
<feature type="strand" evidence="19">
    <location>
        <begin position="2133"/>
        <end position="2137"/>
    </location>
</feature>
<feature type="helix" evidence="19">
    <location>
        <begin position="2138"/>
        <end position="2146"/>
    </location>
</feature>
<feature type="turn" evidence="19">
    <location>
        <begin position="2147"/>
        <end position="2150"/>
    </location>
</feature>
<feature type="helix" evidence="19">
    <location>
        <begin position="2157"/>
        <end position="2164"/>
    </location>
</feature>
<feature type="helix" evidence="19">
    <location>
        <begin position="2169"/>
        <end position="2180"/>
    </location>
</feature>
<feature type="turn" evidence="19">
    <location>
        <begin position="2185"/>
        <end position="2188"/>
    </location>
</feature>
<feature type="helix" evidence="19">
    <location>
        <begin position="2189"/>
        <end position="2191"/>
    </location>
</feature>
<feature type="helix" evidence="19">
    <location>
        <begin position="2196"/>
        <end position="2220"/>
    </location>
</feature>
<feature type="strand" evidence="19">
    <location>
        <begin position="2229"/>
        <end position="2233"/>
    </location>
</feature>
<feature type="turn" evidence="19">
    <location>
        <begin position="2234"/>
        <end position="2236"/>
    </location>
</feature>
<feature type="strand" evidence="19">
    <location>
        <begin position="2239"/>
        <end position="2241"/>
    </location>
</feature>
<feature type="helix" evidence="19">
    <location>
        <begin position="2250"/>
        <end position="2252"/>
    </location>
</feature>
<feature type="strand" evidence="19">
    <location>
        <begin position="2253"/>
        <end position="2256"/>
    </location>
</feature>
<feature type="helix" evidence="19">
    <location>
        <begin position="2266"/>
        <end position="2272"/>
    </location>
</feature>
<feature type="turn" evidence="19">
    <location>
        <begin position="2276"/>
        <end position="2279"/>
    </location>
</feature>
<feature type="helix" evidence="19">
    <location>
        <begin position="2280"/>
        <end position="2294"/>
    </location>
</feature>
<feature type="helix" evidence="19">
    <location>
        <begin position="2296"/>
        <end position="2303"/>
    </location>
</feature>
<feature type="helix" evidence="19">
    <location>
        <begin position="2306"/>
        <end position="2309"/>
    </location>
</feature>
<feature type="strand" evidence="19">
    <location>
        <begin position="2313"/>
        <end position="2316"/>
    </location>
</feature>
<feature type="helix" evidence="19">
    <location>
        <begin position="2317"/>
        <end position="2328"/>
    </location>
</feature>
<feature type="strand" evidence="19">
    <location>
        <begin position="2332"/>
        <end position="2334"/>
    </location>
</feature>
<feature type="helix" evidence="19">
    <location>
        <begin position="2340"/>
        <end position="2351"/>
    </location>
</feature>
<feature type="helix" evidence="19">
    <location>
        <begin position="2354"/>
        <end position="2357"/>
    </location>
</feature>
<feature type="helix" evidence="20">
    <location>
        <begin position="2362"/>
        <end position="2364"/>
    </location>
</feature>
<organism>
    <name type="scientific">Saccharomyces cerevisiae (strain ATCC 204508 / S288c)</name>
    <name type="common">Baker's yeast</name>
    <dbReference type="NCBI Taxonomy" id="559292"/>
    <lineage>
        <taxon>Eukaryota</taxon>
        <taxon>Fungi</taxon>
        <taxon>Dikarya</taxon>
        <taxon>Ascomycota</taxon>
        <taxon>Saccharomycotina</taxon>
        <taxon>Saccharomycetes</taxon>
        <taxon>Saccharomycetales</taxon>
        <taxon>Saccharomycetaceae</taxon>
        <taxon>Saccharomyces</taxon>
    </lineage>
</organism>
<protein>
    <recommendedName>
        <fullName>Serine/threonine-protein kinase MEC1</fullName>
        <ecNumber>2.7.11.1</ecNumber>
    </recommendedName>
    <alternativeName>
        <fullName>ATR homolog</fullName>
    </alternativeName>
    <alternativeName>
        <fullName>DNA-damage checkpoint kinase MEC1</fullName>
    </alternativeName>
    <alternativeName>
        <fullName>Mitosis entry checkpoint protein 1</fullName>
    </alternativeName>
</protein>
<comment type="function">
    <text evidence="6 7 8 9 10 11 12 13 14 15 16 17">Serine/threonine protein kinase which activates checkpoint signaling upon genotoxic stresses such as ionizing radiation (IR), ultraviolet light (UV), or DNA replication stalling, thereby acting as a DNA damage sensor. Recognizes the substrate consensus sequence [ST]-Q. Recruited in complex with protein LCD1 by the single-strand-binding protein complex RPA to DNA lesions in order to initiate the DNA repair by homologous recombination, after the MRX-complex and TEL1 are displaced. Phosphorylates LCD1 and RPA2, a subunit of RPA, involved in DNA replication, repair and recombination. Phosphorylates RAD9, CHK1 and RAD53, which leads to the activation of the CHK1 and RAD53 kinases involved in DNA damage repair cascade. Phosphorylates histone H2A to form H2AS128ph (gamma-H2A) at sites of DNA damage, also involved in the regulation of DNA damage response mechanism. Also phosphorylates SLX4 and RTT107 which are proteins involved in genome stability. Required for cell growth and meiotic recombination.</text>
</comment>
<comment type="catalytic activity">
    <reaction>
        <text>L-seryl-[protein] + ATP = O-phospho-L-seryl-[protein] + ADP + H(+)</text>
        <dbReference type="Rhea" id="RHEA:17989"/>
        <dbReference type="Rhea" id="RHEA-COMP:9863"/>
        <dbReference type="Rhea" id="RHEA-COMP:11604"/>
        <dbReference type="ChEBI" id="CHEBI:15378"/>
        <dbReference type="ChEBI" id="CHEBI:29999"/>
        <dbReference type="ChEBI" id="CHEBI:30616"/>
        <dbReference type="ChEBI" id="CHEBI:83421"/>
        <dbReference type="ChEBI" id="CHEBI:456216"/>
        <dbReference type="EC" id="2.7.11.1"/>
    </reaction>
</comment>
<comment type="catalytic activity">
    <reaction>
        <text>L-threonyl-[protein] + ATP = O-phospho-L-threonyl-[protein] + ADP + H(+)</text>
        <dbReference type="Rhea" id="RHEA:46608"/>
        <dbReference type="Rhea" id="RHEA-COMP:11060"/>
        <dbReference type="Rhea" id="RHEA-COMP:11605"/>
        <dbReference type="ChEBI" id="CHEBI:15378"/>
        <dbReference type="ChEBI" id="CHEBI:30013"/>
        <dbReference type="ChEBI" id="CHEBI:30616"/>
        <dbReference type="ChEBI" id="CHEBI:61977"/>
        <dbReference type="ChEBI" id="CHEBI:456216"/>
        <dbReference type="EC" id="2.7.11.1"/>
    </reaction>
</comment>
<comment type="subunit">
    <text evidence="4 5 8 14">Interacts with LCD1, which is required for localization MEC1 to the RPA complex. Interacts directly with the RPA subunits RFA1 and RFA2.</text>
</comment>
<comment type="interaction">
    <interactant intactId="EBI-6668">
        <id>P38111</id>
    </interactant>
    <interactant intactId="EBI-25984">
        <id>P47027</id>
        <label>DPB11</label>
    </interactant>
    <organismsDiffer>false</organismsDiffer>
    <experiments>3</experiments>
</comment>
<comment type="interaction">
    <interactant intactId="EBI-6668">
        <id>P38111</id>
    </interactant>
    <interactant intactId="EBI-35652">
        <id>Q04377</id>
        <label>LCD1</label>
    </interactant>
    <organismsDiffer>false</organismsDiffer>
    <experiments>11</experiments>
</comment>
<comment type="subcellular location">
    <subcellularLocation>
        <location>Nucleus</location>
    </subcellularLocation>
    <text>Localizes to nuclear DNA repair foci in response to DNA double strand breaks. The recruitment to DNA lesion sites requires its interaction with LCD1 and the presence of the RPA complex on DNA.</text>
</comment>
<comment type="developmental stage">
    <text>Induced during meiosis.</text>
</comment>
<comment type="similarity">
    <text evidence="18">Belongs to the PI3/PI4-kinase family. ATM subfamily.</text>
</comment>
<keyword id="KW-0002">3D-structure</keyword>
<keyword id="KW-0067">ATP-binding</keyword>
<keyword id="KW-0156">Chromatin regulator</keyword>
<keyword id="KW-0227">DNA damage</keyword>
<keyword id="KW-0234">DNA repair</keyword>
<keyword id="KW-0418">Kinase</keyword>
<keyword id="KW-0469">Meiosis</keyword>
<keyword id="KW-0547">Nucleotide-binding</keyword>
<keyword id="KW-0539">Nucleus</keyword>
<keyword id="KW-1185">Reference proteome</keyword>
<keyword id="KW-0723">Serine/threonine-protein kinase</keyword>
<keyword id="KW-0808">Transferase</keyword>
<accession>P38111</accession>
<accession>D6VQD2</accession>
<accession>Q02580</accession>
<proteinExistence type="evidence at protein level"/>
<evidence type="ECO:0000255" key="1">
    <source>
        <dbReference type="PROSITE-ProRule" id="PRU00269"/>
    </source>
</evidence>
<evidence type="ECO:0000255" key="2">
    <source>
        <dbReference type="PROSITE-ProRule" id="PRU00534"/>
    </source>
</evidence>
<evidence type="ECO:0000255" key="3">
    <source>
        <dbReference type="PROSITE-ProRule" id="PRU00535"/>
    </source>
</evidence>
<evidence type="ECO:0000269" key="4">
    <source>
    </source>
</evidence>
<evidence type="ECO:0000269" key="5">
    <source>
    </source>
</evidence>
<evidence type="ECO:0000269" key="6">
    <source>
    </source>
</evidence>
<evidence type="ECO:0000269" key="7">
    <source>
    </source>
</evidence>
<evidence type="ECO:0000269" key="8">
    <source>
    </source>
</evidence>
<evidence type="ECO:0000269" key="9">
    <source>
    </source>
</evidence>
<evidence type="ECO:0000269" key="10">
    <source>
    </source>
</evidence>
<evidence type="ECO:0000269" key="11">
    <source>
    </source>
</evidence>
<evidence type="ECO:0000269" key="12">
    <source>
    </source>
</evidence>
<evidence type="ECO:0000269" key="13">
    <source>
    </source>
</evidence>
<evidence type="ECO:0000269" key="14">
    <source>
    </source>
</evidence>
<evidence type="ECO:0000269" key="15">
    <source>
    </source>
</evidence>
<evidence type="ECO:0000269" key="16">
    <source>
    </source>
</evidence>
<evidence type="ECO:0000269" key="17">
    <source>
    </source>
</evidence>
<evidence type="ECO:0000305" key="18"/>
<evidence type="ECO:0007829" key="19">
    <source>
        <dbReference type="PDB" id="6Z2W"/>
    </source>
</evidence>
<evidence type="ECO:0007829" key="20">
    <source>
        <dbReference type="PDB" id="6Z2X"/>
    </source>
</evidence>
<gene>
    <name type="primary">MEC1</name>
    <name type="synonym">ESR1</name>
    <name type="synonym">SAD3</name>
    <name type="ordered locus">YBR136W</name>
    <name type="ORF">YBR1012</name>
</gene>